<comment type="function">
    <text evidence="1">Hydrolyzes trehalose to glucose. Could be involved, in cells returning to low osmolarity conditions, in the utilization of the accumulated cytoplasmic trehalose, which was synthesized in response to high osmolarity.</text>
</comment>
<comment type="catalytic activity">
    <reaction evidence="1">
        <text>alpha,alpha-trehalose + H2O = alpha-D-glucose + beta-D-glucose</text>
        <dbReference type="Rhea" id="RHEA:32675"/>
        <dbReference type="ChEBI" id="CHEBI:15377"/>
        <dbReference type="ChEBI" id="CHEBI:15903"/>
        <dbReference type="ChEBI" id="CHEBI:16551"/>
        <dbReference type="ChEBI" id="CHEBI:17925"/>
        <dbReference type="EC" id="3.2.1.28"/>
    </reaction>
</comment>
<comment type="pathway">
    <text evidence="1">Glycan degradation; trehalose degradation; D-glucose from alpha,alpha-trehalose: step 1/1.</text>
</comment>
<comment type="subunit">
    <text evidence="1">Monomer.</text>
</comment>
<comment type="subcellular location">
    <subcellularLocation>
        <location evidence="1">Cytoplasm</location>
    </subcellularLocation>
</comment>
<comment type="similarity">
    <text evidence="1">Belongs to the glycosyl hydrolase 37 family.</text>
</comment>
<proteinExistence type="inferred from homology"/>
<accession>Q1R584</accession>
<evidence type="ECO:0000255" key="1">
    <source>
        <dbReference type="HAMAP-Rule" id="MF_01059"/>
    </source>
</evidence>
<gene>
    <name evidence="1" type="primary">treF</name>
    <name type="ordered locus">UTI89_C4051</name>
</gene>
<reference key="1">
    <citation type="journal article" date="2006" name="Proc. Natl. Acad. Sci. U.S.A.">
        <title>Identification of genes subject to positive selection in uropathogenic strains of Escherichia coli: a comparative genomics approach.</title>
        <authorList>
            <person name="Chen S.L."/>
            <person name="Hung C.-S."/>
            <person name="Xu J."/>
            <person name="Reigstad C.S."/>
            <person name="Magrini V."/>
            <person name="Sabo A."/>
            <person name="Blasiar D."/>
            <person name="Bieri T."/>
            <person name="Meyer R.R."/>
            <person name="Ozersky P."/>
            <person name="Armstrong J.R."/>
            <person name="Fulton R.S."/>
            <person name="Latreille J.P."/>
            <person name="Spieth J."/>
            <person name="Hooton T.M."/>
            <person name="Mardis E.R."/>
            <person name="Hultgren S.J."/>
            <person name="Gordon J.I."/>
        </authorList>
    </citation>
    <scope>NUCLEOTIDE SEQUENCE [LARGE SCALE GENOMIC DNA]</scope>
    <source>
        <strain>UTI89 / UPEC</strain>
    </source>
</reference>
<organism>
    <name type="scientific">Escherichia coli (strain UTI89 / UPEC)</name>
    <dbReference type="NCBI Taxonomy" id="364106"/>
    <lineage>
        <taxon>Bacteria</taxon>
        <taxon>Pseudomonadati</taxon>
        <taxon>Pseudomonadota</taxon>
        <taxon>Gammaproteobacteria</taxon>
        <taxon>Enterobacterales</taxon>
        <taxon>Enterobacteriaceae</taxon>
        <taxon>Escherichia</taxon>
    </lineage>
</organism>
<keyword id="KW-0963">Cytoplasm</keyword>
<keyword id="KW-0326">Glycosidase</keyword>
<keyword id="KW-0378">Hydrolase</keyword>
<sequence>MLNQKIQNPNPDELMIEVDLCYELDPYELKLDEMIEAEPEPEMIEGLPASDALTPADRYLELFEHVQSAKIFPDSKTFPDCAPKMDPLDILIRYRKVRRHRDFDLRKFVENHFWLPEVYSSEYVSDPQNSLKEHIDQLWPVLTREPQDHIPWSSLLALPQSYIVPGGRFSETYYWDSYFTMLGLAESGREDLLKCMADNFAWMIENYGHIPNGNRTYYLSRSQPPVFALMVELFEEDGVRGARRYLDHLKMEYAFWMDGAESLIPNQAYRHVVRMPDGSLLNRYWDDRDTPRDESWLEDVETAKHSGRPPNEVYRDLRAGAASGWDYSSRWLRDTGRLASIRTTQFIPIDLNAFLFKLESAIANISALKGEKETEALFRQKASARRDAVNRYLWDDENGIYRDYDWRREQLALFSAAAIVPLYVGMANHEQADRLANAVRSRLLTPGGILASEYETGEQWDKPNGWAPLQWMAIQGFKMYGDDLLGDEIARNWLKTVNQFYLEQHKLIEKYHIADGVPREGGGGEYPLQDGFGWTNGVVRRLIGLYGEP</sequence>
<name>TREF_ECOUT</name>
<dbReference type="EC" id="3.2.1.28" evidence="1"/>
<dbReference type="EMBL" id="CP000243">
    <property type="protein sequence ID" value="ABE09480.1"/>
    <property type="molecule type" value="Genomic_DNA"/>
</dbReference>
<dbReference type="RefSeq" id="WP_000934214.1">
    <property type="nucleotide sequence ID" value="NZ_CP064825.1"/>
</dbReference>
<dbReference type="SMR" id="Q1R584"/>
<dbReference type="CAZy" id="GH37">
    <property type="family name" value="Glycoside Hydrolase Family 37"/>
</dbReference>
<dbReference type="KEGG" id="eci:UTI89_C4051"/>
<dbReference type="HOGENOM" id="CLU_006451_3_1_6"/>
<dbReference type="UniPathway" id="UPA00300">
    <property type="reaction ID" value="UER00535"/>
</dbReference>
<dbReference type="Proteomes" id="UP000001952">
    <property type="component" value="Chromosome"/>
</dbReference>
<dbReference type="GO" id="GO:0005737">
    <property type="term" value="C:cytoplasm"/>
    <property type="evidence" value="ECO:0007669"/>
    <property type="project" value="UniProtKB-SubCell"/>
</dbReference>
<dbReference type="GO" id="GO:0004555">
    <property type="term" value="F:alpha,alpha-trehalase activity"/>
    <property type="evidence" value="ECO:0007669"/>
    <property type="project" value="UniProtKB-UniRule"/>
</dbReference>
<dbReference type="GO" id="GO:0071474">
    <property type="term" value="P:cellular hyperosmotic response"/>
    <property type="evidence" value="ECO:0007669"/>
    <property type="project" value="InterPro"/>
</dbReference>
<dbReference type="GO" id="GO:0005993">
    <property type="term" value="P:trehalose catabolic process"/>
    <property type="evidence" value="ECO:0007669"/>
    <property type="project" value="UniProtKB-UniRule"/>
</dbReference>
<dbReference type="FunFam" id="1.50.10.10:FF:000003">
    <property type="entry name" value="Cytoplasmic trehalase"/>
    <property type="match status" value="1"/>
</dbReference>
<dbReference type="Gene3D" id="1.50.10.10">
    <property type="match status" value="1"/>
</dbReference>
<dbReference type="HAMAP" id="MF_01059">
    <property type="entry name" value="Cyt_trehalase"/>
    <property type="match status" value="1"/>
</dbReference>
<dbReference type="InterPro" id="IPR008928">
    <property type="entry name" value="6-hairpin_glycosidase_sf"/>
</dbReference>
<dbReference type="InterPro" id="IPR012341">
    <property type="entry name" value="6hp_glycosidase-like_sf"/>
</dbReference>
<dbReference type="InterPro" id="IPR023715">
    <property type="entry name" value="Cyt_trehalase"/>
</dbReference>
<dbReference type="InterPro" id="IPR001661">
    <property type="entry name" value="Glyco_hydro_37"/>
</dbReference>
<dbReference type="InterPro" id="IPR018232">
    <property type="entry name" value="Glyco_hydro_37_CS"/>
</dbReference>
<dbReference type="NCBIfam" id="NF009773">
    <property type="entry name" value="PRK13270.1"/>
    <property type="match status" value="1"/>
</dbReference>
<dbReference type="NCBIfam" id="NF009774">
    <property type="entry name" value="PRK13271.1"/>
    <property type="match status" value="1"/>
</dbReference>
<dbReference type="PANTHER" id="PTHR23403:SF8">
    <property type="entry name" value="CYTOPLASMIC TREHALASE"/>
    <property type="match status" value="1"/>
</dbReference>
<dbReference type="PANTHER" id="PTHR23403">
    <property type="entry name" value="TREHALASE"/>
    <property type="match status" value="1"/>
</dbReference>
<dbReference type="Pfam" id="PF01204">
    <property type="entry name" value="Trehalase"/>
    <property type="match status" value="1"/>
</dbReference>
<dbReference type="PRINTS" id="PR00744">
    <property type="entry name" value="GLHYDRLASE37"/>
</dbReference>
<dbReference type="SUPFAM" id="SSF48208">
    <property type="entry name" value="Six-hairpin glycosidases"/>
    <property type="match status" value="1"/>
</dbReference>
<dbReference type="PROSITE" id="PS00927">
    <property type="entry name" value="TREHALASE_1"/>
    <property type="match status" value="1"/>
</dbReference>
<dbReference type="PROSITE" id="PS00928">
    <property type="entry name" value="TREHALASE_2"/>
    <property type="match status" value="1"/>
</dbReference>
<feature type="chain" id="PRO_1000064444" description="Cytoplasmic trehalase">
    <location>
        <begin position="1"/>
        <end position="549"/>
    </location>
</feature>
<feature type="active site" description="Proton donor/acceptor" evidence="1">
    <location>
        <position position="326"/>
    </location>
</feature>
<feature type="active site" description="Proton donor/acceptor" evidence="1">
    <location>
        <position position="509"/>
    </location>
</feature>
<feature type="binding site" evidence="1">
    <location>
        <position position="168"/>
    </location>
    <ligand>
        <name>substrate</name>
    </ligand>
</feature>
<feature type="binding site" evidence="1">
    <location>
        <begin position="175"/>
        <end position="176"/>
    </location>
    <ligand>
        <name>substrate</name>
    </ligand>
</feature>
<feature type="binding site" evidence="1">
    <location>
        <position position="212"/>
    </location>
    <ligand>
        <name>substrate</name>
    </ligand>
</feature>
<feature type="binding site" evidence="1">
    <location>
        <begin position="221"/>
        <end position="223"/>
    </location>
    <ligand>
        <name>substrate</name>
    </ligand>
</feature>
<feature type="binding site" evidence="1">
    <location>
        <begin position="292"/>
        <end position="294"/>
    </location>
    <ligand>
        <name>substrate</name>
    </ligand>
</feature>
<feature type="binding site" evidence="1">
    <location>
        <position position="324"/>
    </location>
    <ligand>
        <name>substrate</name>
    </ligand>
</feature>
<feature type="binding site" evidence="1">
    <location>
        <position position="525"/>
    </location>
    <ligand>
        <name>substrate</name>
    </ligand>
</feature>
<protein>
    <recommendedName>
        <fullName evidence="1">Cytoplasmic trehalase</fullName>
        <ecNumber evidence="1">3.2.1.28</ecNumber>
    </recommendedName>
    <alternativeName>
        <fullName evidence="1">Alpha,alpha-trehalase</fullName>
    </alternativeName>
    <alternativeName>
        <fullName evidence="1">Alpha,alpha-trehalose glucohydrolase</fullName>
    </alternativeName>
</protein>